<protein>
    <recommendedName>
        <fullName>Malate dehydrogenase</fullName>
        <ecNumber>1.1.1.37</ecNumber>
    </recommendedName>
</protein>
<sequence length="17" mass="1663">XKKPVRVAVTGAAGQIG</sequence>
<evidence type="ECO:0000250" key="1"/>
<evidence type="ECO:0000255" key="2">
    <source>
        <dbReference type="PROSITE-ProRule" id="PRU10004"/>
    </source>
</evidence>
<evidence type="ECO:0000305" key="3"/>
<reference key="1">
    <citation type="journal article" date="1997" name="J. Bacteriol.">
        <title>Structural studies of malate dehydrogenases (MDHs): MDHs in Brevundimonas species are the first reported MDHs in Proteobacteria which resemble lactate dehydrogenases in primary structure.</title>
        <authorList>
            <person name="Charnock C."/>
        </authorList>
    </citation>
    <scope>PROTEIN SEQUENCE</scope>
    <source>
        <strain>CCUG 12929 / LMG 7167</strain>
    </source>
</reference>
<gene>
    <name type="primary">mdh</name>
</gene>
<comment type="function">
    <text evidence="1">Catalyzes the reversible oxidation of malate to oxaloacetate.</text>
</comment>
<comment type="catalytic activity">
    <reaction evidence="2">
        <text>(S)-malate + NAD(+) = oxaloacetate + NADH + H(+)</text>
        <dbReference type="Rhea" id="RHEA:21432"/>
        <dbReference type="ChEBI" id="CHEBI:15378"/>
        <dbReference type="ChEBI" id="CHEBI:15589"/>
        <dbReference type="ChEBI" id="CHEBI:16452"/>
        <dbReference type="ChEBI" id="CHEBI:57540"/>
        <dbReference type="ChEBI" id="CHEBI:57945"/>
        <dbReference type="EC" id="1.1.1.37"/>
    </reaction>
</comment>
<comment type="similarity">
    <text evidence="3">Belongs to the LDH/MDH superfamily. MDH type 2 family.</text>
</comment>
<keyword id="KW-0903">Direct protein sequencing</keyword>
<keyword id="KW-0520">NAD</keyword>
<keyword id="KW-0560">Oxidoreductase</keyword>
<keyword id="KW-0816">Tricarboxylic acid cycle</keyword>
<proteinExistence type="evidence at protein level"/>
<name>MDH_ACIDE</name>
<organism>
    <name type="scientific">Acidovorax delafieldii</name>
    <name type="common">Pseudomonas delafieldii</name>
    <dbReference type="NCBI Taxonomy" id="47920"/>
    <lineage>
        <taxon>Bacteria</taxon>
        <taxon>Pseudomonadati</taxon>
        <taxon>Pseudomonadota</taxon>
        <taxon>Betaproteobacteria</taxon>
        <taxon>Burkholderiales</taxon>
        <taxon>Comamonadaceae</taxon>
        <taxon>Acidovorax</taxon>
    </lineage>
</organism>
<dbReference type="EC" id="1.1.1.37"/>
<dbReference type="GO" id="GO:0030060">
    <property type="term" value="F:L-malate dehydrogenase (NAD+) activity"/>
    <property type="evidence" value="ECO:0007669"/>
    <property type="project" value="UniProtKB-EC"/>
</dbReference>
<dbReference type="GO" id="GO:0006099">
    <property type="term" value="P:tricarboxylic acid cycle"/>
    <property type="evidence" value="ECO:0007669"/>
    <property type="project" value="UniProtKB-KW"/>
</dbReference>
<accession>P80540</accession>
<feature type="chain" id="PRO_0000113344" description="Malate dehydrogenase">
    <location>
        <begin position="1"/>
        <end position="17" status="greater than"/>
    </location>
</feature>
<feature type="binding site" evidence="1">
    <location>
        <begin position="11"/>
        <end position="17"/>
    </location>
    <ligand>
        <name>NAD(+)</name>
        <dbReference type="ChEBI" id="CHEBI:57540"/>
    </ligand>
</feature>
<feature type="non-terminal residue">
    <location>
        <position position="17"/>
    </location>
</feature>